<protein>
    <recommendedName>
        <fullName evidence="1">Large ribosomal subunit protein uL2</fullName>
    </recommendedName>
    <alternativeName>
        <fullName evidence="3">50S ribosomal protein L2</fullName>
    </alternativeName>
</protein>
<sequence length="274" mass="30094">MPIVKSKPTSAGRRFVVSVVSPDLHKGEPYAPLVEKKVRSGGRNNQGRITTRHVGGGHKQRYRIIDFKRDKDGIPGRVERLEYDPNRSAHIALVLYADGERRYVIAPKGVQAGDQLLSGTNAPIRAGNTLPLRNIPVGTVVHCIEMKPGKGAQMARSAGAAVQLVAREGQHATLRLRSGEMRKVPADCRATIGEVSNSEHSLRKFGKAGAKRWLGIRPTVRGTAMNPVDHPHGGGEGRNFGKHPVTPWGVPTKGYKTRKNKRTDNMIVRRRNKK</sequence>
<organism>
    <name type="scientific">Thioalkalivibrio sulfidiphilus (strain HL-EbGR7)</name>
    <dbReference type="NCBI Taxonomy" id="396588"/>
    <lineage>
        <taxon>Bacteria</taxon>
        <taxon>Pseudomonadati</taxon>
        <taxon>Pseudomonadota</taxon>
        <taxon>Gammaproteobacteria</taxon>
        <taxon>Chromatiales</taxon>
        <taxon>Ectothiorhodospiraceae</taxon>
        <taxon>Thioalkalivibrio</taxon>
    </lineage>
</organism>
<proteinExistence type="inferred from homology"/>
<name>RL2_THISH</name>
<feature type="chain" id="PRO_1000165778" description="Large ribosomal subunit protein uL2">
    <location>
        <begin position="1"/>
        <end position="274"/>
    </location>
</feature>
<feature type="region of interest" description="Disordered" evidence="2">
    <location>
        <begin position="221"/>
        <end position="256"/>
    </location>
</feature>
<reference key="1">
    <citation type="journal article" date="2011" name="Stand. Genomic Sci.">
        <title>Complete genome sequence of 'Thioalkalivibrio sulfidophilus' HL-EbGr7.</title>
        <authorList>
            <person name="Muyzer G."/>
            <person name="Sorokin D.Y."/>
            <person name="Mavromatis K."/>
            <person name="Lapidus A."/>
            <person name="Clum A."/>
            <person name="Ivanova N."/>
            <person name="Pati A."/>
            <person name="d'Haeseleer P."/>
            <person name="Woyke T."/>
            <person name="Kyrpides N.C."/>
        </authorList>
    </citation>
    <scope>NUCLEOTIDE SEQUENCE [LARGE SCALE GENOMIC DNA]</scope>
    <source>
        <strain>HL-EbGR7</strain>
    </source>
</reference>
<evidence type="ECO:0000255" key="1">
    <source>
        <dbReference type="HAMAP-Rule" id="MF_01320"/>
    </source>
</evidence>
<evidence type="ECO:0000256" key="2">
    <source>
        <dbReference type="SAM" id="MobiDB-lite"/>
    </source>
</evidence>
<evidence type="ECO:0000305" key="3"/>
<keyword id="KW-1185">Reference proteome</keyword>
<keyword id="KW-0687">Ribonucleoprotein</keyword>
<keyword id="KW-0689">Ribosomal protein</keyword>
<keyword id="KW-0694">RNA-binding</keyword>
<keyword id="KW-0699">rRNA-binding</keyword>
<dbReference type="EMBL" id="CP001339">
    <property type="protein sequence ID" value="ACL73401.1"/>
    <property type="molecule type" value="Genomic_DNA"/>
</dbReference>
<dbReference type="RefSeq" id="WP_012638877.1">
    <property type="nucleotide sequence ID" value="NC_011901.1"/>
</dbReference>
<dbReference type="SMR" id="B8GV55"/>
<dbReference type="STRING" id="396588.Tgr7_2321"/>
<dbReference type="KEGG" id="tgr:Tgr7_2321"/>
<dbReference type="eggNOG" id="COG0090">
    <property type="taxonomic scope" value="Bacteria"/>
</dbReference>
<dbReference type="HOGENOM" id="CLU_036235_2_1_6"/>
<dbReference type="OrthoDB" id="9778722at2"/>
<dbReference type="Proteomes" id="UP000002383">
    <property type="component" value="Chromosome"/>
</dbReference>
<dbReference type="GO" id="GO:0015934">
    <property type="term" value="C:large ribosomal subunit"/>
    <property type="evidence" value="ECO:0007669"/>
    <property type="project" value="InterPro"/>
</dbReference>
<dbReference type="GO" id="GO:0019843">
    <property type="term" value="F:rRNA binding"/>
    <property type="evidence" value="ECO:0007669"/>
    <property type="project" value="UniProtKB-UniRule"/>
</dbReference>
<dbReference type="GO" id="GO:0003735">
    <property type="term" value="F:structural constituent of ribosome"/>
    <property type="evidence" value="ECO:0007669"/>
    <property type="project" value="InterPro"/>
</dbReference>
<dbReference type="GO" id="GO:0016740">
    <property type="term" value="F:transferase activity"/>
    <property type="evidence" value="ECO:0007669"/>
    <property type="project" value="InterPro"/>
</dbReference>
<dbReference type="GO" id="GO:0002181">
    <property type="term" value="P:cytoplasmic translation"/>
    <property type="evidence" value="ECO:0007669"/>
    <property type="project" value="TreeGrafter"/>
</dbReference>
<dbReference type="FunFam" id="2.30.30.30:FF:000001">
    <property type="entry name" value="50S ribosomal protein L2"/>
    <property type="match status" value="1"/>
</dbReference>
<dbReference type="FunFam" id="2.40.50.140:FF:000003">
    <property type="entry name" value="50S ribosomal protein L2"/>
    <property type="match status" value="1"/>
</dbReference>
<dbReference type="FunFam" id="4.10.950.10:FF:000001">
    <property type="entry name" value="50S ribosomal protein L2"/>
    <property type="match status" value="1"/>
</dbReference>
<dbReference type="Gene3D" id="2.30.30.30">
    <property type="match status" value="1"/>
</dbReference>
<dbReference type="Gene3D" id="2.40.50.140">
    <property type="entry name" value="Nucleic acid-binding proteins"/>
    <property type="match status" value="1"/>
</dbReference>
<dbReference type="Gene3D" id="4.10.950.10">
    <property type="entry name" value="Ribosomal protein L2, domain 3"/>
    <property type="match status" value="1"/>
</dbReference>
<dbReference type="HAMAP" id="MF_01320_B">
    <property type="entry name" value="Ribosomal_uL2_B"/>
    <property type="match status" value="1"/>
</dbReference>
<dbReference type="InterPro" id="IPR012340">
    <property type="entry name" value="NA-bd_OB-fold"/>
</dbReference>
<dbReference type="InterPro" id="IPR014722">
    <property type="entry name" value="Rib_uL2_dom2"/>
</dbReference>
<dbReference type="InterPro" id="IPR002171">
    <property type="entry name" value="Ribosomal_uL2"/>
</dbReference>
<dbReference type="InterPro" id="IPR005880">
    <property type="entry name" value="Ribosomal_uL2_bac/org-type"/>
</dbReference>
<dbReference type="InterPro" id="IPR022669">
    <property type="entry name" value="Ribosomal_uL2_C"/>
</dbReference>
<dbReference type="InterPro" id="IPR022671">
    <property type="entry name" value="Ribosomal_uL2_CS"/>
</dbReference>
<dbReference type="InterPro" id="IPR014726">
    <property type="entry name" value="Ribosomal_uL2_dom3"/>
</dbReference>
<dbReference type="InterPro" id="IPR022666">
    <property type="entry name" value="Ribosomal_uL2_RNA-bd_dom"/>
</dbReference>
<dbReference type="InterPro" id="IPR008991">
    <property type="entry name" value="Translation_prot_SH3-like_sf"/>
</dbReference>
<dbReference type="NCBIfam" id="TIGR01171">
    <property type="entry name" value="rplB_bact"/>
    <property type="match status" value="1"/>
</dbReference>
<dbReference type="PANTHER" id="PTHR13691:SF5">
    <property type="entry name" value="LARGE RIBOSOMAL SUBUNIT PROTEIN UL2M"/>
    <property type="match status" value="1"/>
</dbReference>
<dbReference type="PANTHER" id="PTHR13691">
    <property type="entry name" value="RIBOSOMAL PROTEIN L2"/>
    <property type="match status" value="1"/>
</dbReference>
<dbReference type="Pfam" id="PF00181">
    <property type="entry name" value="Ribosomal_L2"/>
    <property type="match status" value="1"/>
</dbReference>
<dbReference type="Pfam" id="PF03947">
    <property type="entry name" value="Ribosomal_L2_C"/>
    <property type="match status" value="1"/>
</dbReference>
<dbReference type="PIRSF" id="PIRSF002158">
    <property type="entry name" value="Ribosomal_L2"/>
    <property type="match status" value="1"/>
</dbReference>
<dbReference type="SMART" id="SM01383">
    <property type="entry name" value="Ribosomal_L2"/>
    <property type="match status" value="1"/>
</dbReference>
<dbReference type="SMART" id="SM01382">
    <property type="entry name" value="Ribosomal_L2_C"/>
    <property type="match status" value="1"/>
</dbReference>
<dbReference type="SUPFAM" id="SSF50249">
    <property type="entry name" value="Nucleic acid-binding proteins"/>
    <property type="match status" value="1"/>
</dbReference>
<dbReference type="SUPFAM" id="SSF50104">
    <property type="entry name" value="Translation proteins SH3-like domain"/>
    <property type="match status" value="1"/>
</dbReference>
<dbReference type="PROSITE" id="PS00467">
    <property type="entry name" value="RIBOSOMAL_L2"/>
    <property type="match status" value="1"/>
</dbReference>
<accession>B8GV55</accession>
<comment type="function">
    <text evidence="1">One of the primary rRNA binding proteins. Required for association of the 30S and 50S subunits to form the 70S ribosome, for tRNA binding and peptide bond formation. It has been suggested to have peptidyltransferase activity; this is somewhat controversial. Makes several contacts with the 16S rRNA in the 70S ribosome.</text>
</comment>
<comment type="subunit">
    <text evidence="1">Part of the 50S ribosomal subunit. Forms a bridge to the 30S subunit in the 70S ribosome.</text>
</comment>
<comment type="similarity">
    <text evidence="1">Belongs to the universal ribosomal protein uL2 family.</text>
</comment>
<gene>
    <name evidence="1" type="primary">rplB</name>
    <name type="ordered locus">Tgr7_2321</name>
</gene>